<evidence type="ECO:0000255" key="1">
    <source>
        <dbReference type="HAMAP-Rule" id="MF_01849"/>
    </source>
</evidence>
<evidence type="ECO:0000255" key="2">
    <source>
        <dbReference type="PROSITE-ProRule" id="PRU01266"/>
    </source>
</evidence>
<feature type="chain" id="PRO_1000188554" description="Dual-specificity RNA methyltransferase RlmN">
    <location>
        <begin position="1"/>
        <end position="411"/>
    </location>
</feature>
<feature type="domain" description="Radical SAM core" evidence="2">
    <location>
        <begin position="131"/>
        <end position="380"/>
    </location>
</feature>
<feature type="active site" description="Proton acceptor" evidence="1">
    <location>
        <position position="125"/>
    </location>
</feature>
<feature type="active site" description="S-methylcysteine intermediate" evidence="1">
    <location>
        <position position="383"/>
    </location>
</feature>
<feature type="binding site" evidence="1">
    <location>
        <position position="145"/>
    </location>
    <ligand>
        <name>[4Fe-4S] cluster</name>
        <dbReference type="ChEBI" id="CHEBI:49883"/>
        <note>4Fe-4S-S-AdoMet</note>
    </ligand>
</feature>
<feature type="binding site" evidence="1">
    <location>
        <position position="149"/>
    </location>
    <ligand>
        <name>[4Fe-4S] cluster</name>
        <dbReference type="ChEBI" id="CHEBI:49883"/>
        <note>4Fe-4S-S-AdoMet</note>
    </ligand>
</feature>
<feature type="binding site" evidence="1">
    <location>
        <position position="152"/>
    </location>
    <ligand>
        <name>[4Fe-4S] cluster</name>
        <dbReference type="ChEBI" id="CHEBI:49883"/>
        <note>4Fe-4S-S-AdoMet</note>
    </ligand>
</feature>
<feature type="binding site" evidence="1">
    <location>
        <begin position="209"/>
        <end position="210"/>
    </location>
    <ligand>
        <name>S-adenosyl-L-methionine</name>
        <dbReference type="ChEBI" id="CHEBI:59789"/>
    </ligand>
</feature>
<feature type="binding site" evidence="1">
    <location>
        <position position="241"/>
    </location>
    <ligand>
        <name>S-adenosyl-L-methionine</name>
        <dbReference type="ChEBI" id="CHEBI:59789"/>
    </ligand>
</feature>
<feature type="binding site" evidence="1">
    <location>
        <begin position="263"/>
        <end position="265"/>
    </location>
    <ligand>
        <name>S-adenosyl-L-methionine</name>
        <dbReference type="ChEBI" id="CHEBI:59789"/>
    </ligand>
</feature>
<feature type="binding site" evidence="1">
    <location>
        <position position="340"/>
    </location>
    <ligand>
        <name>S-adenosyl-L-methionine</name>
        <dbReference type="ChEBI" id="CHEBI:59789"/>
    </ligand>
</feature>
<feature type="disulfide bond" description="(transient)" evidence="1">
    <location>
        <begin position="138"/>
        <end position="383"/>
    </location>
</feature>
<accession>C0RGD9</accession>
<keyword id="KW-0004">4Fe-4S</keyword>
<keyword id="KW-0963">Cytoplasm</keyword>
<keyword id="KW-1015">Disulfide bond</keyword>
<keyword id="KW-0408">Iron</keyword>
<keyword id="KW-0411">Iron-sulfur</keyword>
<keyword id="KW-0479">Metal-binding</keyword>
<keyword id="KW-0489">Methyltransferase</keyword>
<keyword id="KW-0698">rRNA processing</keyword>
<keyword id="KW-0949">S-adenosyl-L-methionine</keyword>
<keyword id="KW-0808">Transferase</keyword>
<keyword id="KW-0819">tRNA processing</keyword>
<name>RLMN_BRUMB</name>
<organism>
    <name type="scientific">Brucella melitensis biotype 2 (strain ATCC 23457)</name>
    <dbReference type="NCBI Taxonomy" id="546272"/>
    <lineage>
        <taxon>Bacteria</taxon>
        <taxon>Pseudomonadati</taxon>
        <taxon>Pseudomonadota</taxon>
        <taxon>Alphaproteobacteria</taxon>
        <taxon>Hyphomicrobiales</taxon>
        <taxon>Brucellaceae</taxon>
        <taxon>Brucella/Ochrobactrum group</taxon>
        <taxon>Brucella</taxon>
    </lineage>
</organism>
<reference key="1">
    <citation type="submission" date="2009-03" db="EMBL/GenBank/DDBJ databases">
        <title>Brucella melitensis ATCC 23457 whole genome shotgun sequencing project.</title>
        <authorList>
            <person name="Setubal J.C."/>
            <person name="Boyle S."/>
            <person name="Crasta O.R."/>
            <person name="Gillespie J.J."/>
            <person name="Kenyon R.W."/>
            <person name="Lu J."/>
            <person name="Mane S."/>
            <person name="Nagrani S."/>
            <person name="Shallom J.M."/>
            <person name="Shallom S."/>
            <person name="Shukla M."/>
            <person name="Snyder E.E."/>
            <person name="Sobral B.W."/>
            <person name="Wattam A.R."/>
            <person name="Will R."/>
            <person name="Williams K."/>
            <person name="Yoo H."/>
            <person name="Munk C."/>
            <person name="Tapia R."/>
            <person name="Han C."/>
            <person name="Detter J.C."/>
            <person name="Bruce D."/>
            <person name="Brettin T.S."/>
        </authorList>
    </citation>
    <scope>NUCLEOTIDE SEQUENCE [LARGE SCALE GENOMIC DNA]</scope>
    <source>
        <strain>ATCC 23457</strain>
    </source>
</reference>
<dbReference type="EC" id="2.1.1.192" evidence="1"/>
<dbReference type="EMBL" id="CP001488">
    <property type="protein sequence ID" value="ACN99896.1"/>
    <property type="molecule type" value="Genomic_DNA"/>
</dbReference>
<dbReference type="RefSeq" id="WP_004686672.1">
    <property type="nucleotide sequence ID" value="NC_012441.1"/>
</dbReference>
<dbReference type="SMR" id="C0RGD9"/>
<dbReference type="KEGG" id="bmi:BMEA_A0080"/>
<dbReference type="HOGENOM" id="CLU_029101_2_0_5"/>
<dbReference type="Proteomes" id="UP000001748">
    <property type="component" value="Chromosome I"/>
</dbReference>
<dbReference type="GO" id="GO:0005737">
    <property type="term" value="C:cytoplasm"/>
    <property type="evidence" value="ECO:0007669"/>
    <property type="project" value="UniProtKB-SubCell"/>
</dbReference>
<dbReference type="GO" id="GO:0051539">
    <property type="term" value="F:4 iron, 4 sulfur cluster binding"/>
    <property type="evidence" value="ECO:0007669"/>
    <property type="project" value="UniProtKB-UniRule"/>
</dbReference>
<dbReference type="GO" id="GO:0046872">
    <property type="term" value="F:metal ion binding"/>
    <property type="evidence" value="ECO:0007669"/>
    <property type="project" value="UniProtKB-KW"/>
</dbReference>
<dbReference type="GO" id="GO:0070040">
    <property type="term" value="F:rRNA (adenine(2503)-C2-)-methyltransferase activity"/>
    <property type="evidence" value="ECO:0007669"/>
    <property type="project" value="UniProtKB-UniRule"/>
</dbReference>
<dbReference type="GO" id="GO:0019843">
    <property type="term" value="F:rRNA binding"/>
    <property type="evidence" value="ECO:0007669"/>
    <property type="project" value="UniProtKB-UniRule"/>
</dbReference>
<dbReference type="GO" id="GO:0002935">
    <property type="term" value="F:tRNA (adenine(37)-C2)-methyltransferase activity"/>
    <property type="evidence" value="ECO:0007669"/>
    <property type="project" value="UniProtKB-UniRule"/>
</dbReference>
<dbReference type="GO" id="GO:0000049">
    <property type="term" value="F:tRNA binding"/>
    <property type="evidence" value="ECO:0007669"/>
    <property type="project" value="UniProtKB-UniRule"/>
</dbReference>
<dbReference type="GO" id="GO:0070475">
    <property type="term" value="P:rRNA base methylation"/>
    <property type="evidence" value="ECO:0007669"/>
    <property type="project" value="UniProtKB-UniRule"/>
</dbReference>
<dbReference type="GO" id="GO:0030488">
    <property type="term" value="P:tRNA methylation"/>
    <property type="evidence" value="ECO:0007669"/>
    <property type="project" value="UniProtKB-UniRule"/>
</dbReference>
<dbReference type="CDD" id="cd01335">
    <property type="entry name" value="Radical_SAM"/>
    <property type="match status" value="1"/>
</dbReference>
<dbReference type="FunFam" id="3.20.20.70:FF:000008">
    <property type="entry name" value="Dual-specificity RNA methyltransferase RlmN"/>
    <property type="match status" value="1"/>
</dbReference>
<dbReference type="Gene3D" id="1.10.150.530">
    <property type="match status" value="1"/>
</dbReference>
<dbReference type="Gene3D" id="3.20.20.70">
    <property type="entry name" value="Aldolase class I"/>
    <property type="match status" value="1"/>
</dbReference>
<dbReference type="HAMAP" id="MF_01849">
    <property type="entry name" value="RNA_methyltr_RlmN"/>
    <property type="match status" value="1"/>
</dbReference>
<dbReference type="InterPro" id="IPR013785">
    <property type="entry name" value="Aldolase_TIM"/>
</dbReference>
<dbReference type="InterPro" id="IPR040072">
    <property type="entry name" value="Methyltransferase_A"/>
</dbReference>
<dbReference type="InterPro" id="IPR048641">
    <property type="entry name" value="RlmN_N"/>
</dbReference>
<dbReference type="InterPro" id="IPR027492">
    <property type="entry name" value="RNA_MTrfase_RlmN"/>
</dbReference>
<dbReference type="InterPro" id="IPR004383">
    <property type="entry name" value="rRNA_lsu_MTrfase_RlmN/Cfr"/>
</dbReference>
<dbReference type="InterPro" id="IPR007197">
    <property type="entry name" value="rSAM"/>
</dbReference>
<dbReference type="NCBIfam" id="TIGR00048">
    <property type="entry name" value="rRNA_mod_RlmN"/>
    <property type="match status" value="1"/>
</dbReference>
<dbReference type="PANTHER" id="PTHR30544">
    <property type="entry name" value="23S RRNA METHYLTRANSFERASE"/>
    <property type="match status" value="1"/>
</dbReference>
<dbReference type="PANTHER" id="PTHR30544:SF5">
    <property type="entry name" value="RADICAL SAM CORE DOMAIN-CONTAINING PROTEIN"/>
    <property type="match status" value="1"/>
</dbReference>
<dbReference type="Pfam" id="PF04055">
    <property type="entry name" value="Radical_SAM"/>
    <property type="match status" value="1"/>
</dbReference>
<dbReference type="Pfam" id="PF21016">
    <property type="entry name" value="RlmN_N"/>
    <property type="match status" value="1"/>
</dbReference>
<dbReference type="PIRSF" id="PIRSF006004">
    <property type="entry name" value="CHP00048"/>
    <property type="match status" value="1"/>
</dbReference>
<dbReference type="SFLD" id="SFLDF00275">
    <property type="entry name" value="adenosine_C2_methyltransferase"/>
    <property type="match status" value="1"/>
</dbReference>
<dbReference type="SFLD" id="SFLDS00029">
    <property type="entry name" value="Radical_SAM"/>
    <property type="match status" value="1"/>
</dbReference>
<dbReference type="SUPFAM" id="SSF102114">
    <property type="entry name" value="Radical SAM enzymes"/>
    <property type="match status" value="1"/>
</dbReference>
<dbReference type="PROSITE" id="PS51918">
    <property type="entry name" value="RADICAL_SAM"/>
    <property type="match status" value="1"/>
</dbReference>
<protein>
    <recommendedName>
        <fullName evidence="1">Dual-specificity RNA methyltransferase RlmN</fullName>
        <ecNumber evidence="1">2.1.1.192</ecNumber>
    </recommendedName>
    <alternativeName>
        <fullName evidence="1">23S rRNA (adenine(2503)-C(2))-methyltransferase</fullName>
    </alternativeName>
    <alternativeName>
        <fullName evidence="1">23S rRNA m2A2503 methyltransferase</fullName>
    </alternativeName>
    <alternativeName>
        <fullName evidence="1">Ribosomal RNA large subunit methyltransferase N</fullName>
    </alternativeName>
    <alternativeName>
        <fullName evidence="1">tRNA (adenine(37)-C(2))-methyltransferase</fullName>
    </alternativeName>
    <alternativeName>
        <fullName evidence="1">tRNA m2A37 methyltransferase</fullName>
    </alternativeName>
</protein>
<sequence length="411" mass="45896">MSISFDLTIDDTRDQLARHARASLEAKPSLIGMSREEMAAALIAAGVPERQVKMRISQLWHWLYVRGVSDFADMRNISKDLRAMLAQHFTIARPEVVEEQISQDGTRKWLFRFPPRSAGRPVEIESVYIPEEGRGTLCISSQVGCTLTCSFCHTGTQKLVRNLTSEEILAQLLTARDRLGDFPDKDTPDGAMVPAEGRKITNIVMMGMGEPLYNFEEVKKALLIASDGDGLSLSKRRITLSTSGVVPEIYRTGDEIGVMLAISLHAVRDELRDILVPINKKYPLAELIKACREYPGLSNAKRITFEYVMLKDINDSLDDAKLLVKLLQGIPAKINLIPFNPWPGTNYQCSDWEQIEKFADYVNAAGYASPIRTPRGRDILAACGQLKSESERLRKSERLALEAMMIAGHGE</sequence>
<comment type="function">
    <text evidence="1">Specifically methylates position 2 of adenine 2503 in 23S rRNA and position 2 of adenine 37 in tRNAs. m2A2503 modification seems to play a crucial role in the proofreading step occurring at the peptidyl transferase center and thus would serve to optimize ribosomal fidelity.</text>
</comment>
<comment type="catalytic activity">
    <reaction evidence="1">
        <text>adenosine(2503) in 23S rRNA + 2 reduced [2Fe-2S]-[ferredoxin] + 2 S-adenosyl-L-methionine = 2-methyladenosine(2503) in 23S rRNA + 5'-deoxyadenosine + L-methionine + 2 oxidized [2Fe-2S]-[ferredoxin] + S-adenosyl-L-homocysteine</text>
        <dbReference type="Rhea" id="RHEA:42916"/>
        <dbReference type="Rhea" id="RHEA-COMP:10000"/>
        <dbReference type="Rhea" id="RHEA-COMP:10001"/>
        <dbReference type="Rhea" id="RHEA-COMP:10152"/>
        <dbReference type="Rhea" id="RHEA-COMP:10282"/>
        <dbReference type="ChEBI" id="CHEBI:17319"/>
        <dbReference type="ChEBI" id="CHEBI:33737"/>
        <dbReference type="ChEBI" id="CHEBI:33738"/>
        <dbReference type="ChEBI" id="CHEBI:57844"/>
        <dbReference type="ChEBI" id="CHEBI:57856"/>
        <dbReference type="ChEBI" id="CHEBI:59789"/>
        <dbReference type="ChEBI" id="CHEBI:74411"/>
        <dbReference type="ChEBI" id="CHEBI:74497"/>
        <dbReference type="EC" id="2.1.1.192"/>
    </reaction>
</comment>
<comment type="catalytic activity">
    <reaction evidence="1">
        <text>adenosine(37) in tRNA + 2 reduced [2Fe-2S]-[ferredoxin] + 2 S-adenosyl-L-methionine = 2-methyladenosine(37) in tRNA + 5'-deoxyadenosine + L-methionine + 2 oxidized [2Fe-2S]-[ferredoxin] + S-adenosyl-L-homocysteine</text>
        <dbReference type="Rhea" id="RHEA:43332"/>
        <dbReference type="Rhea" id="RHEA-COMP:10000"/>
        <dbReference type="Rhea" id="RHEA-COMP:10001"/>
        <dbReference type="Rhea" id="RHEA-COMP:10162"/>
        <dbReference type="Rhea" id="RHEA-COMP:10485"/>
        <dbReference type="ChEBI" id="CHEBI:17319"/>
        <dbReference type="ChEBI" id="CHEBI:33737"/>
        <dbReference type="ChEBI" id="CHEBI:33738"/>
        <dbReference type="ChEBI" id="CHEBI:57844"/>
        <dbReference type="ChEBI" id="CHEBI:57856"/>
        <dbReference type="ChEBI" id="CHEBI:59789"/>
        <dbReference type="ChEBI" id="CHEBI:74411"/>
        <dbReference type="ChEBI" id="CHEBI:74497"/>
        <dbReference type="EC" id="2.1.1.192"/>
    </reaction>
</comment>
<comment type="cofactor">
    <cofactor evidence="1">
        <name>[4Fe-4S] cluster</name>
        <dbReference type="ChEBI" id="CHEBI:49883"/>
    </cofactor>
    <text evidence="1">Binds 1 [4Fe-4S] cluster. The cluster is coordinated with 3 cysteines and an exchangeable S-adenosyl-L-methionine.</text>
</comment>
<comment type="subcellular location">
    <subcellularLocation>
        <location evidence="1">Cytoplasm</location>
    </subcellularLocation>
</comment>
<comment type="miscellaneous">
    <text evidence="1">Reaction proceeds by a ping-pong mechanism involving intermediate methylation of a conserved cysteine residue.</text>
</comment>
<comment type="similarity">
    <text evidence="1">Belongs to the radical SAM superfamily. RlmN family.</text>
</comment>
<gene>
    <name evidence="1" type="primary">rlmN</name>
    <name type="ordered locus">BMEA_A0080</name>
</gene>
<proteinExistence type="inferred from homology"/>